<keyword id="KW-0053">Apoptosis</keyword>
<keyword id="KW-0963">Cytoplasm</keyword>
<keyword id="KW-0479">Metal-binding</keyword>
<keyword id="KW-0539">Nucleus</keyword>
<keyword id="KW-1185">Reference proteome</keyword>
<keyword id="KW-0677">Repeat</keyword>
<keyword id="KW-0804">Transcription</keyword>
<keyword id="KW-0805">Transcription regulation</keyword>
<keyword id="KW-0862">Zinc</keyword>
<keyword id="KW-0863">Zinc-finger</keyword>
<proteinExistence type="evidence at transcript level"/>
<sequence length="405" mass="45884">MAAVVQNVVKLLGEQYYRDAMEQCHNYNARLCAERSVRLPFLDSQTGVAQSNCYIWMEKRHRGPGLAAGQLYSYPARRWRKKRRAHPPEDPRLSFPSIKPDTDQTLKKEGLISQDGSSLEALLRTDPLEKRSLPDPRMDDDSLGEFPVTNSRARKRILEPDDFLDDLDDEDYEEDTPKRRGKGKAKGKGVGGARKKLDAAILEDRDKPYACDNSYKQKHSLKPPDRVCGKRYKNRPGLSYHYAHSHLAEEEGDDKDDSQPPTPVSQRSEEQKSKKGPDGLALPNNYCDFCLGDSKINKKTGQPEELVSCSDCGRSGHPSCLQFTPVMMAAVKTYRWQCIECKCCNICGTSENDDQLLFCDDCDRGYHMYCLTPPMSEPPEGSWSCHLCLDLLKEKASIYQNQNNS</sequence>
<feature type="chain" id="PRO_0000168151" description="Zinc finger protein ubi-d4">
    <location>
        <begin position="1"/>
        <end position="405"/>
    </location>
</feature>
<feature type="zinc finger region" description="C2H2-type; atypical">
    <location>
        <begin position="209"/>
        <end position="246"/>
    </location>
</feature>
<feature type="zinc finger region" description="PHD-type 1" evidence="2">
    <location>
        <begin position="284"/>
        <end position="344"/>
    </location>
</feature>
<feature type="zinc finger region" description="PHD-type 2" evidence="2">
    <location>
        <begin position="341"/>
        <end position="391"/>
    </location>
</feature>
<feature type="region of interest" description="Disordered" evidence="3">
    <location>
        <begin position="80"/>
        <end position="147"/>
    </location>
</feature>
<feature type="region of interest" description="Disordered" evidence="3">
    <location>
        <begin position="165"/>
        <end position="194"/>
    </location>
</feature>
<feature type="region of interest" description="Disordered" evidence="3">
    <location>
        <begin position="210"/>
        <end position="230"/>
    </location>
</feature>
<feature type="region of interest" description="Disordered" evidence="3">
    <location>
        <begin position="248"/>
        <end position="280"/>
    </location>
</feature>
<feature type="compositionally biased region" description="Basic and acidic residues" evidence="3">
    <location>
        <begin position="100"/>
        <end position="110"/>
    </location>
</feature>
<feature type="compositionally biased region" description="Basic and acidic residues" evidence="3">
    <location>
        <begin position="126"/>
        <end position="140"/>
    </location>
</feature>
<feature type="compositionally biased region" description="Acidic residues" evidence="3">
    <location>
        <begin position="165"/>
        <end position="174"/>
    </location>
</feature>
<feature type="compositionally biased region" description="Basic and acidic residues" evidence="3">
    <location>
        <begin position="267"/>
        <end position="277"/>
    </location>
</feature>
<name>REQU_CHICK</name>
<protein>
    <recommendedName>
        <fullName>Zinc finger protein ubi-d4</fullName>
    </recommendedName>
    <alternativeName>
        <fullName>Apoptosis response zinc finger protein</fullName>
    </alternativeName>
    <alternativeName>
        <fullName>Protein requiem</fullName>
    </alternativeName>
</protein>
<reference key="1">
    <citation type="submission" date="2001-03" db="EMBL/GenBank/DDBJ databases">
        <authorList>
            <person name="Ninkina N.N."/>
            <person name="Kulikova D.A."/>
            <person name="Mertsalov I.B."/>
            <person name="Buchman V.L."/>
        </authorList>
    </citation>
    <scope>NUCLEOTIDE SEQUENCE [MRNA]</scope>
</reference>
<organism>
    <name type="scientific">Gallus gallus</name>
    <name type="common">Chicken</name>
    <dbReference type="NCBI Taxonomy" id="9031"/>
    <lineage>
        <taxon>Eukaryota</taxon>
        <taxon>Metazoa</taxon>
        <taxon>Chordata</taxon>
        <taxon>Craniata</taxon>
        <taxon>Vertebrata</taxon>
        <taxon>Euteleostomi</taxon>
        <taxon>Archelosauria</taxon>
        <taxon>Archosauria</taxon>
        <taxon>Dinosauria</taxon>
        <taxon>Saurischia</taxon>
        <taxon>Theropoda</taxon>
        <taxon>Coelurosauria</taxon>
        <taxon>Aves</taxon>
        <taxon>Neognathae</taxon>
        <taxon>Galloanserae</taxon>
        <taxon>Galliformes</taxon>
        <taxon>Phasianidae</taxon>
        <taxon>Phasianinae</taxon>
        <taxon>Gallus</taxon>
    </lineage>
</organism>
<gene>
    <name type="primary">REQ</name>
</gene>
<accession>P58268</accession>
<comment type="function">
    <text>May be a transcription factor required for the apoptosis response following survival factor withdrawal from myeloid cells. Might also have a role in the development and maturation of lymphoid cells.</text>
</comment>
<comment type="subcellular location">
    <subcellularLocation>
        <location evidence="1">Cytoplasm</location>
    </subcellularLocation>
    <subcellularLocation>
        <location evidence="1">Nucleus</location>
    </subcellularLocation>
</comment>
<comment type="similarity">
    <text evidence="4">Belongs to the requiem/DPF family.</text>
</comment>
<dbReference type="EMBL" id="AF362751">
    <property type="protein sequence ID" value="AAK51965.1"/>
    <property type="molecule type" value="mRNA"/>
</dbReference>
<dbReference type="RefSeq" id="NP_989662.1">
    <property type="nucleotide sequence ID" value="NM_204331.1"/>
</dbReference>
<dbReference type="SMR" id="P58268"/>
<dbReference type="FunCoup" id="P58268">
    <property type="interactions" value="2498"/>
</dbReference>
<dbReference type="PaxDb" id="9031-ENSGALP00000017805"/>
<dbReference type="GeneID" id="374236"/>
<dbReference type="KEGG" id="gga:374236"/>
<dbReference type="CTD" id="5977"/>
<dbReference type="VEuPathDB" id="HostDB:geneid_374236"/>
<dbReference type="eggNOG" id="KOG1244">
    <property type="taxonomic scope" value="Eukaryota"/>
</dbReference>
<dbReference type="InParanoid" id="P58268"/>
<dbReference type="OMA" id="GMGMDWD"/>
<dbReference type="OrthoDB" id="1903104at2759"/>
<dbReference type="PhylomeDB" id="P58268"/>
<dbReference type="PRO" id="PR:P58268"/>
<dbReference type="Proteomes" id="UP000000539">
    <property type="component" value="Unassembled WGS sequence"/>
</dbReference>
<dbReference type="GO" id="GO:0005737">
    <property type="term" value="C:cytoplasm"/>
    <property type="evidence" value="ECO:0007669"/>
    <property type="project" value="UniProtKB-SubCell"/>
</dbReference>
<dbReference type="GO" id="GO:0071565">
    <property type="term" value="C:nBAF complex"/>
    <property type="evidence" value="ECO:0000318"/>
    <property type="project" value="GO_Central"/>
</dbReference>
<dbReference type="GO" id="GO:0008270">
    <property type="term" value="F:zinc ion binding"/>
    <property type="evidence" value="ECO:0007669"/>
    <property type="project" value="UniProtKB-KW"/>
</dbReference>
<dbReference type="GO" id="GO:0006915">
    <property type="term" value="P:apoptotic process"/>
    <property type="evidence" value="ECO:0007669"/>
    <property type="project" value="UniProtKB-KW"/>
</dbReference>
<dbReference type="GO" id="GO:0007399">
    <property type="term" value="P:nervous system development"/>
    <property type="evidence" value="ECO:0000318"/>
    <property type="project" value="GO_Central"/>
</dbReference>
<dbReference type="CDD" id="cd15691">
    <property type="entry name" value="PHD1_DPF2_like"/>
    <property type="match status" value="1"/>
</dbReference>
<dbReference type="CDD" id="cd15530">
    <property type="entry name" value="PHD2_d4"/>
    <property type="match status" value="1"/>
</dbReference>
<dbReference type="FunFam" id="3.30.40.10:FF:000005">
    <property type="entry name" value="zinc finger protein isoform X1"/>
    <property type="match status" value="1"/>
</dbReference>
<dbReference type="Gene3D" id="3.30.40.10">
    <property type="entry name" value="Zinc/RING finger domain, C3HC4 (zinc finger)"/>
    <property type="match status" value="1"/>
</dbReference>
<dbReference type="InterPro" id="IPR025750">
    <property type="entry name" value="DPF1-3_N"/>
</dbReference>
<dbReference type="InterPro" id="IPR011011">
    <property type="entry name" value="Znf_FYVE_PHD"/>
</dbReference>
<dbReference type="InterPro" id="IPR001965">
    <property type="entry name" value="Znf_PHD"/>
</dbReference>
<dbReference type="InterPro" id="IPR019787">
    <property type="entry name" value="Znf_PHD-finger"/>
</dbReference>
<dbReference type="InterPro" id="IPR013083">
    <property type="entry name" value="Znf_RING/FYVE/PHD"/>
</dbReference>
<dbReference type="PANTHER" id="PTHR45888">
    <property type="entry name" value="HL01030P-RELATED"/>
    <property type="match status" value="1"/>
</dbReference>
<dbReference type="PANTHER" id="PTHR45888:SF7">
    <property type="entry name" value="ZINC FINGER PROTEIN UBI-D4"/>
    <property type="match status" value="1"/>
</dbReference>
<dbReference type="Pfam" id="PF14051">
    <property type="entry name" value="DPF1-3_N"/>
    <property type="match status" value="1"/>
</dbReference>
<dbReference type="Pfam" id="PF00628">
    <property type="entry name" value="PHD"/>
    <property type="match status" value="2"/>
</dbReference>
<dbReference type="SMART" id="SM00249">
    <property type="entry name" value="PHD"/>
    <property type="match status" value="2"/>
</dbReference>
<dbReference type="SUPFAM" id="SSF57903">
    <property type="entry name" value="FYVE/PHD zinc finger"/>
    <property type="match status" value="2"/>
</dbReference>
<dbReference type="PROSITE" id="PS01359">
    <property type="entry name" value="ZF_PHD_1"/>
    <property type="match status" value="1"/>
</dbReference>
<dbReference type="PROSITE" id="PS50016">
    <property type="entry name" value="ZF_PHD_2"/>
    <property type="match status" value="2"/>
</dbReference>
<evidence type="ECO:0000250" key="1"/>
<evidence type="ECO:0000255" key="2">
    <source>
        <dbReference type="PROSITE-ProRule" id="PRU00146"/>
    </source>
</evidence>
<evidence type="ECO:0000256" key="3">
    <source>
        <dbReference type="SAM" id="MobiDB-lite"/>
    </source>
</evidence>
<evidence type="ECO:0000305" key="4"/>